<dbReference type="EMBL" id="AF311918">
    <property type="protein sequence ID" value="AAL09453.1"/>
    <property type="molecule type" value="Genomic_DNA"/>
</dbReference>
<dbReference type="SMR" id="Q95LF5"/>
<dbReference type="STRING" id="39432.ENSSBOP00000019999"/>
<dbReference type="GlyCosmos" id="Q95LF5">
    <property type="glycosylation" value="4 sites, No reported glycans"/>
</dbReference>
<dbReference type="Proteomes" id="UP000233220">
    <property type="component" value="Whole Genome Shotgun Assembly"/>
</dbReference>
<dbReference type="GO" id="GO:0005769">
    <property type="term" value="C:early endosome"/>
    <property type="evidence" value="ECO:0007669"/>
    <property type="project" value="UniProtKB-SubCell"/>
</dbReference>
<dbReference type="GO" id="GO:0016020">
    <property type="term" value="C:membrane"/>
    <property type="evidence" value="ECO:0007669"/>
    <property type="project" value="UniProtKB-SubCell"/>
</dbReference>
<dbReference type="GO" id="GO:0055037">
    <property type="term" value="C:recycling endosome"/>
    <property type="evidence" value="ECO:0007669"/>
    <property type="project" value="UniProtKB-SubCell"/>
</dbReference>
<dbReference type="GO" id="GO:0019957">
    <property type="term" value="F:C-C chemokine binding"/>
    <property type="evidence" value="ECO:0007669"/>
    <property type="project" value="TreeGrafter"/>
</dbReference>
<dbReference type="GO" id="GO:0004930">
    <property type="term" value="F:G protein-coupled receptor activity"/>
    <property type="evidence" value="ECO:0007669"/>
    <property type="project" value="UniProtKB-KW"/>
</dbReference>
<dbReference type="GO" id="GO:0070098">
    <property type="term" value="P:chemokine-mediated signaling pathway"/>
    <property type="evidence" value="ECO:0007669"/>
    <property type="project" value="InterPro"/>
</dbReference>
<dbReference type="GO" id="GO:0006954">
    <property type="term" value="P:inflammatory response"/>
    <property type="evidence" value="ECO:0007669"/>
    <property type="project" value="InterPro"/>
</dbReference>
<dbReference type="GO" id="GO:0032642">
    <property type="term" value="P:regulation of chemokine production"/>
    <property type="evidence" value="ECO:0007669"/>
    <property type="project" value="TreeGrafter"/>
</dbReference>
<dbReference type="CDD" id="cd15010">
    <property type="entry name" value="7tmA_ACKR1_DARC"/>
    <property type="match status" value="1"/>
</dbReference>
<dbReference type="FunFam" id="1.20.1070.10:FF:000266">
    <property type="entry name" value="Atypical chemokine receptor 1"/>
    <property type="match status" value="1"/>
</dbReference>
<dbReference type="InterPro" id="IPR005384">
    <property type="entry name" value="Duffy_chemokine_rcpt"/>
</dbReference>
<dbReference type="PANTHER" id="PTHR14181:SF1">
    <property type="entry name" value="ATYPICAL CHEMOKINE RECEPTOR 1"/>
    <property type="match status" value="1"/>
</dbReference>
<dbReference type="PANTHER" id="PTHR14181">
    <property type="entry name" value="DUFFY ANTIGEN/CHEMOKINE RECEPTOR"/>
    <property type="match status" value="1"/>
</dbReference>
<dbReference type="PRINTS" id="PR01559">
    <property type="entry name" value="DUFFYANTIGEN"/>
</dbReference>
<feature type="chain" id="PRO_0000152591" description="Atypical chemokine receptor 1">
    <location>
        <begin position="1"/>
        <end position="336"/>
    </location>
</feature>
<feature type="topological domain" description="Extracellular" evidence="2">
    <location>
        <begin position="1"/>
        <end position="63"/>
    </location>
</feature>
<feature type="transmembrane region" description="Helical; Name=1" evidence="2">
    <location>
        <begin position="64"/>
        <end position="84"/>
    </location>
</feature>
<feature type="topological domain" description="Cytoplasmic" evidence="2">
    <location>
        <begin position="85"/>
        <end position="95"/>
    </location>
</feature>
<feature type="transmembrane region" description="Helical; Name=2" evidence="2">
    <location>
        <begin position="96"/>
        <end position="116"/>
    </location>
</feature>
<feature type="topological domain" description="Extracellular" evidence="2">
    <location>
        <begin position="117"/>
        <end position="129"/>
    </location>
</feature>
<feature type="transmembrane region" description="Helical; Name=3" evidence="2">
    <location>
        <begin position="130"/>
        <end position="153"/>
    </location>
</feature>
<feature type="topological domain" description="Cytoplasmic" evidence="2">
    <location>
        <begin position="154"/>
        <end position="166"/>
    </location>
</feature>
<feature type="transmembrane region" description="Helical; Name=4" evidence="2">
    <location>
        <begin position="167"/>
        <end position="187"/>
    </location>
</feature>
<feature type="topological domain" description="Extracellular" evidence="2">
    <location>
        <begin position="188"/>
        <end position="207"/>
    </location>
</feature>
<feature type="transmembrane region" description="Helical; Name=5" evidence="2">
    <location>
        <begin position="208"/>
        <end position="228"/>
    </location>
</feature>
<feature type="topological domain" description="Cytoplasmic" evidence="2">
    <location>
        <begin position="229"/>
        <end position="244"/>
    </location>
</feature>
<feature type="transmembrane region" description="Helical; Name=6" evidence="2">
    <location>
        <begin position="245"/>
        <end position="265"/>
    </location>
</feature>
<feature type="topological domain" description="Extracellular" evidence="2">
    <location>
        <begin position="266"/>
        <end position="287"/>
    </location>
</feature>
<feature type="transmembrane region" description="Helical; Name=7" evidence="2">
    <location>
        <begin position="288"/>
        <end position="308"/>
    </location>
</feature>
<feature type="topological domain" description="Cytoplasmic" evidence="2">
    <location>
        <begin position="309"/>
        <end position="336"/>
    </location>
</feature>
<feature type="glycosylation site" description="N-linked (GlcNAc...) asparagine" evidence="2">
    <location>
        <position position="16"/>
    </location>
</feature>
<feature type="glycosylation site" description="N-linked (GlcNAc...) asparagine" evidence="2">
    <location>
        <position position="27"/>
    </location>
</feature>
<feature type="glycosylation site" description="N-linked (GlcNAc...) asparagine" evidence="2">
    <location>
        <position position="33"/>
    </location>
</feature>
<feature type="glycosylation site" description="N-linked (GlcNAc...) asparagine" evidence="2">
    <location>
        <position position="58"/>
    </location>
</feature>
<feature type="disulfide bond" evidence="1">
    <location>
        <begin position="51"/>
        <end position="276"/>
    </location>
</feature>
<feature type="disulfide bond" evidence="1">
    <location>
        <begin position="129"/>
        <end position="195"/>
    </location>
</feature>
<gene>
    <name type="primary">ACKR1</name>
    <name type="synonym">DARC</name>
    <name type="synonym">FY</name>
</gene>
<sequence>MGNCLHQAELSPSTENSSQLNLEDLWNFSYNGNDSFPEIDYDASLAAAAPCHSCSLLNDSSLPFFILASDLGILASSTVLFMLFRPLFRWQLCPGWPVLAQLAVGSALFSIVVPILAPGLGNTHSSALCSLGYCVWYGSAFAQALLLGCHASLGPKLGAGQVPGLTLGLPVGLWGATALLTLPITLASGASDGLCTPIYSTELEALQATHAVACFAIFVLLPLGLFGAKGLKKALGMGPGPWMNILWVWFIFWWPHGLVLGLDFLVGSKLSLLPTCLAQQVLDLLLNLAEALAIVHCVATPLLLALFCHQTTRTLLPSLPLPERWSSPVDTLGSKS</sequence>
<reference key="1">
    <citation type="journal article" date="2004" name="Immunogenetics">
        <title>Sequence, evolution and ligand binding properties of mammalian Duffy antigen/receptor for chemokines.</title>
        <authorList>
            <person name="Tournamille C."/>
            <person name="Blancher A."/>
            <person name="Le Van Kim C."/>
            <person name="Gane P."/>
            <person name="Apoil P.-A."/>
            <person name="Nakamoto W."/>
            <person name="Cartron J.-P."/>
            <person name="Colin Y."/>
        </authorList>
    </citation>
    <scope>NUCLEOTIDE SEQUENCE [GENOMIC DNA]</scope>
</reference>
<name>ACKR1_SAIBB</name>
<organism>
    <name type="scientific">Saimiri boliviensis boliviensis</name>
    <name type="common">Bolivian squirrel monkey</name>
    <dbReference type="NCBI Taxonomy" id="39432"/>
    <lineage>
        <taxon>Eukaryota</taxon>
        <taxon>Metazoa</taxon>
        <taxon>Chordata</taxon>
        <taxon>Craniata</taxon>
        <taxon>Vertebrata</taxon>
        <taxon>Euteleostomi</taxon>
        <taxon>Mammalia</taxon>
        <taxon>Eutheria</taxon>
        <taxon>Euarchontoglires</taxon>
        <taxon>Primates</taxon>
        <taxon>Haplorrhini</taxon>
        <taxon>Platyrrhini</taxon>
        <taxon>Cebidae</taxon>
        <taxon>Saimiriinae</taxon>
        <taxon>Saimiri</taxon>
    </lineage>
</organism>
<evidence type="ECO:0000250" key="1"/>
<evidence type="ECO:0000255" key="2"/>
<evidence type="ECO:0000305" key="3"/>
<proteinExistence type="inferred from homology"/>
<comment type="function">
    <text evidence="1">Atypical chemokine receptor that controls chemokine levels and localization via high-affinity chemokine binding that is uncoupled from classic ligand-driven signal transduction cascades, resulting instead in chemokine sequestration, degradation, or transcytosis. Also known as interceptor (internalizing receptor) or chemokine-scavenging receptor or chemokine decoy receptor. Has a promiscuous chemokine-binding profile, interacting with inflammatory chemokines of both the CXC and the CC subfamilies but not with homeostatic chemokines. Acts as a receptor for chemokines including CCL2, CCL5, CCL7, CCL11, CCL13, CCL14, CCL17, CXCL5, CXCL6, IL8/CXCL8, CXCL11, GRO, RANTES, MCP-1 and TARC. May regulate chemokine bioavailability and, consequently, leukocyte recruitment through two distinct mechanisms: when expressed in endothelial cells, it sustains the abluminal to luminal transcytosis of tissue-derived chemokines and their subsequent presentation to circulating leukocytes; when expressed in erythrocytes, serves as blood reservoir of cognate chemokines but also as a chemokine sink, buffering potential surges in plasma chemokine levels (By similarity).</text>
</comment>
<comment type="subcellular location">
    <subcellularLocation>
        <location evidence="1">Early endosome</location>
    </subcellularLocation>
    <subcellularLocation>
        <location evidence="1">Recycling endosome</location>
    </subcellularLocation>
    <subcellularLocation>
        <location>Membrane</location>
        <topology>Multi-pass membrane protein</topology>
    </subcellularLocation>
    <text evidence="1">Predominantly localizes to endocytic vesicles, and upon stimulation by the ligand is internalized via caveolae. Once internalized, the ligand dissociates from the receptor, and is targeted to degradation while the receptor is recycled back to the cell membrane (By similarity).</text>
</comment>
<comment type="similarity">
    <text evidence="3">Belongs to the G-protein coupled receptor 1 family. Atypical chemokine receptor subfamily.</text>
</comment>
<protein>
    <recommendedName>
        <fullName>Atypical chemokine receptor 1</fullName>
    </recommendedName>
    <alternativeName>
        <fullName>Duffy antigen/chemokine receptor</fullName>
    </alternativeName>
    <cdAntigenName>CD234</cdAntigenName>
</protein>
<accession>Q95LF5</accession>
<keyword id="KW-1015">Disulfide bond</keyword>
<keyword id="KW-0967">Endosome</keyword>
<keyword id="KW-0297">G-protein coupled receptor</keyword>
<keyword id="KW-0325">Glycoprotein</keyword>
<keyword id="KW-0472">Membrane</keyword>
<keyword id="KW-0675">Receptor</keyword>
<keyword id="KW-1185">Reference proteome</keyword>
<keyword id="KW-0807">Transducer</keyword>
<keyword id="KW-0812">Transmembrane</keyword>
<keyword id="KW-1133">Transmembrane helix</keyword>